<evidence type="ECO:0000250" key="1"/>
<evidence type="ECO:0000305" key="2"/>
<organism>
    <name type="scientific">Herpetosiphon aurantiacus</name>
    <name type="common">Herpetosiphon giganteus</name>
    <dbReference type="NCBI Taxonomy" id="65"/>
    <lineage>
        <taxon>Bacteria</taxon>
        <taxon>Bacillati</taxon>
        <taxon>Chloroflexota</taxon>
        <taxon>Chloroflexia</taxon>
        <taxon>Herpetosiphonales</taxon>
        <taxon>Herpetosiphonaceae</taxon>
        <taxon>Herpetosiphon</taxon>
    </lineage>
</organism>
<keyword id="KW-0028">Amino-acid biosynthesis</keyword>
<keyword id="KW-0963">Cytoplasm</keyword>
<keyword id="KW-0486">Methionine biosynthesis</keyword>
<keyword id="KW-0663">Pyridoxal phosphate</keyword>
<keyword id="KW-0808">Transferase</keyword>
<sequence>MDYGFATRAIHAGQDPESVTGAVIVPIYQTSTYAQRGVGDHTGYEYSRTDNPTRTALQTCLAALEEAKHALVFASGLGASTTLMLMLKAGDHVICGDDVYGGTYRLFQRVMTEHGLSFDFIDMADPEAVRAAIKPNTRLIWLETPTNPLLKLAPIAAITRVAREHGIWTIVDNTFASPYNQRPITLGADMVLHSTTKYIGGHSDVVGGAIMTSNDELYEKLKFLQNAAGAVPGPFDCWLVLRGVKTLSIRMRDDERNALAIAQFLTEHPGVEKVIYPGLPSHPQHNLAREQMRGFGGMISILLKGGAEAANAMVSKTKL</sequence>
<name>METB_HERAU</name>
<gene>
    <name type="primary">metB</name>
</gene>
<protein>
    <recommendedName>
        <fullName>Probable cystathionine gamma-synthase</fullName>
        <shortName>CGS</shortName>
        <ecNumber>2.5.1.48</ecNumber>
    </recommendedName>
    <alternativeName>
        <fullName>O-succinylhomoserine (thiol)-lyase</fullName>
    </alternativeName>
</protein>
<feature type="chain" id="PRO_0000114760" description="Probable cystathionine gamma-synthase">
    <location>
        <begin position="1"/>
        <end position="319" status="greater than"/>
    </location>
</feature>
<feature type="modified residue" description="N6-(pyridoxal phosphate)lysine" evidence="1">
    <location>
        <position position="197"/>
    </location>
</feature>
<feature type="non-terminal residue">
    <location>
        <position position="319"/>
    </location>
</feature>
<accession>P24601</accession>
<comment type="function">
    <text evidence="1">Catalyzes the formation of L-cystathionine from O-succinyl-L-homoserine (OSHS) and L-cysteine, via a gamma-replacement reaction. In the absence of thiol, catalyzes gamma-elimination to form 2-oxobutanoate, succinate and ammonia (By similarity).</text>
</comment>
<comment type="catalytic activity">
    <reaction>
        <text>O-succinyl-L-homoserine + L-cysteine = L,L-cystathionine + succinate + H(+)</text>
        <dbReference type="Rhea" id="RHEA:20397"/>
        <dbReference type="ChEBI" id="CHEBI:15378"/>
        <dbReference type="ChEBI" id="CHEBI:30031"/>
        <dbReference type="ChEBI" id="CHEBI:35235"/>
        <dbReference type="ChEBI" id="CHEBI:57661"/>
        <dbReference type="ChEBI" id="CHEBI:58161"/>
        <dbReference type="EC" id="2.5.1.48"/>
    </reaction>
</comment>
<comment type="cofactor">
    <cofactor evidence="1">
        <name>pyridoxal 5'-phosphate</name>
        <dbReference type="ChEBI" id="CHEBI:597326"/>
    </cofactor>
    <text evidence="1">Binds 1 pyridoxal phosphate per subunit.</text>
</comment>
<comment type="subunit">
    <text evidence="1">Homotetramer.</text>
</comment>
<comment type="subcellular location">
    <subcellularLocation>
        <location evidence="1">Cytoplasm</location>
    </subcellularLocation>
</comment>
<comment type="similarity">
    <text evidence="2">Belongs to the trans-sulfuration enzymes family.</text>
</comment>
<dbReference type="EC" id="2.5.1.48"/>
<dbReference type="EMBL" id="X55140">
    <property type="protein sequence ID" value="CAA38939.1"/>
    <property type="molecule type" value="Genomic_DNA"/>
</dbReference>
<dbReference type="PIR" id="S14030">
    <property type="entry name" value="S14030"/>
</dbReference>
<dbReference type="SMR" id="P24601"/>
<dbReference type="GO" id="GO:0005737">
    <property type="term" value="C:cytoplasm"/>
    <property type="evidence" value="ECO:0007669"/>
    <property type="project" value="UniProtKB-SubCell"/>
</dbReference>
<dbReference type="GO" id="GO:0004123">
    <property type="term" value="F:cystathionine gamma-lyase activity"/>
    <property type="evidence" value="ECO:0007669"/>
    <property type="project" value="TreeGrafter"/>
</dbReference>
<dbReference type="GO" id="GO:0003962">
    <property type="term" value="F:cystathionine gamma-synthase activity"/>
    <property type="evidence" value="ECO:0007669"/>
    <property type="project" value="UniProtKB-EC"/>
</dbReference>
<dbReference type="GO" id="GO:0030170">
    <property type="term" value="F:pyridoxal phosphate binding"/>
    <property type="evidence" value="ECO:0007669"/>
    <property type="project" value="InterPro"/>
</dbReference>
<dbReference type="GO" id="GO:0019343">
    <property type="term" value="P:cysteine biosynthetic process via cystathionine"/>
    <property type="evidence" value="ECO:0007669"/>
    <property type="project" value="TreeGrafter"/>
</dbReference>
<dbReference type="GO" id="GO:0009086">
    <property type="term" value="P:methionine biosynthetic process"/>
    <property type="evidence" value="ECO:0007669"/>
    <property type="project" value="UniProtKB-KW"/>
</dbReference>
<dbReference type="GO" id="GO:0019346">
    <property type="term" value="P:transsulfuration"/>
    <property type="evidence" value="ECO:0007669"/>
    <property type="project" value="InterPro"/>
</dbReference>
<dbReference type="CDD" id="cd00614">
    <property type="entry name" value="CGS_like"/>
    <property type="match status" value="1"/>
</dbReference>
<dbReference type="FunFam" id="3.40.640.10:FF:000009">
    <property type="entry name" value="Cystathionine gamma-synthase homolog"/>
    <property type="match status" value="1"/>
</dbReference>
<dbReference type="Gene3D" id="3.90.1150.10">
    <property type="entry name" value="Aspartate Aminotransferase, domain 1"/>
    <property type="match status" value="1"/>
</dbReference>
<dbReference type="Gene3D" id="3.40.640.10">
    <property type="entry name" value="Type I PLP-dependent aspartate aminotransferase-like (Major domain)"/>
    <property type="match status" value="1"/>
</dbReference>
<dbReference type="InterPro" id="IPR000277">
    <property type="entry name" value="Cys/Met-Metab_PyrdxlP-dep_enz"/>
</dbReference>
<dbReference type="InterPro" id="IPR054542">
    <property type="entry name" value="Cys_met_metab_PP"/>
</dbReference>
<dbReference type="InterPro" id="IPR015424">
    <property type="entry name" value="PyrdxlP-dep_Trfase"/>
</dbReference>
<dbReference type="InterPro" id="IPR015421">
    <property type="entry name" value="PyrdxlP-dep_Trfase_major"/>
</dbReference>
<dbReference type="InterPro" id="IPR015422">
    <property type="entry name" value="PyrdxlP-dep_Trfase_small"/>
</dbReference>
<dbReference type="PANTHER" id="PTHR11808:SF15">
    <property type="entry name" value="CYSTATHIONINE GAMMA-LYASE"/>
    <property type="match status" value="1"/>
</dbReference>
<dbReference type="PANTHER" id="PTHR11808">
    <property type="entry name" value="TRANS-SULFURATION ENZYME FAMILY MEMBER"/>
    <property type="match status" value="1"/>
</dbReference>
<dbReference type="Pfam" id="PF01053">
    <property type="entry name" value="Cys_Met_Meta_PP"/>
    <property type="match status" value="1"/>
</dbReference>
<dbReference type="PIRSF" id="PIRSF001434">
    <property type="entry name" value="CGS"/>
    <property type="match status" value="1"/>
</dbReference>
<dbReference type="SUPFAM" id="SSF53383">
    <property type="entry name" value="PLP-dependent transferases"/>
    <property type="match status" value="1"/>
</dbReference>
<dbReference type="PROSITE" id="PS00868">
    <property type="entry name" value="CYS_MET_METAB_PP"/>
    <property type="match status" value="1"/>
</dbReference>
<reference key="1">
    <citation type="journal article" date="1991" name="Nucleic Acids Res.">
        <title>Stepwise cloning and molecular characterization of the HgiDI restriction-modification system from Herpetosiphon giganteus Hpa2.</title>
        <authorList>
            <person name="Duesterhoeft A."/>
            <person name="Erdmann D."/>
            <person name="Kroeger M."/>
        </authorList>
    </citation>
    <scope>NUCLEOTIDE SEQUENCE [GENOMIC DNA]</scope>
    <source>
        <strain>HPA2</strain>
    </source>
</reference>
<proteinExistence type="inferred from homology"/>